<protein>
    <recommendedName>
        <fullName>Zinc-finger homeodomain protein 3</fullName>
        <shortName>AtZHD3</shortName>
    </recommendedName>
    <alternativeName>
        <fullName>Homeobox protein 21</fullName>
        <shortName>AtHB-21</shortName>
    </alternativeName>
    <alternativeName>
        <fullName>Zinc finger homeodomain transcription factor 4</fullName>
    </alternativeName>
</protein>
<organism>
    <name type="scientific">Arabidopsis thaliana</name>
    <name type="common">Mouse-ear cress</name>
    <dbReference type="NCBI Taxonomy" id="3702"/>
    <lineage>
        <taxon>Eukaryota</taxon>
        <taxon>Viridiplantae</taxon>
        <taxon>Streptophyta</taxon>
        <taxon>Embryophyta</taxon>
        <taxon>Tracheophyta</taxon>
        <taxon>Spermatophyta</taxon>
        <taxon>Magnoliopsida</taxon>
        <taxon>eudicotyledons</taxon>
        <taxon>Gunneridae</taxon>
        <taxon>Pentapetalae</taxon>
        <taxon>rosids</taxon>
        <taxon>malvids</taxon>
        <taxon>Brassicales</taxon>
        <taxon>Brassicaceae</taxon>
        <taxon>Camelineae</taxon>
        <taxon>Arabidopsis</taxon>
    </lineage>
</organism>
<sequence>MEIASQEDPIPINTSYGNSGGGHGNMNHHHHANSAPSSLNITTSNPLLVSSNSNGLGKNHDHSHHHHVGYNIMVTNIKKEKPVVIKYKECLKNHAATMGGNAIDGCGEFMPSGEEGSIEALTCSVCNCHRNFHRRETEGEEKTFFSPYLNHHQPPPQQRKLMFHHKMIKSPLPQQMIMPIGVTTAGSNSESEDLMEEEGGGSLTFRQPPPPPSPYSYGHNQKKRFRTKFTQEQKEKMISFAERVGWKIQRQEESVVQQLCQEIGIRRRVLKVWMHNNKQNLSKKSNNVSNNVDLSAGNNDITENLASTNP</sequence>
<comment type="function">
    <text evidence="1">Putative transcription factor.</text>
</comment>
<comment type="subunit">
    <text evidence="1 5 6 7 8">Homo- and heterodimer with other ZFHD proteins (By similarity). Interacts with MIF2 and MIF3; these interactions prevent nuclear localization and DNA-binding to inhibit transcription regulation activity. Binds to ZHD1, ZHD2 and ZHD11. Interacts with HIPP30 (PubMed:18974936). Interacts with KIN10, KIN11 and FLZ8 (Ref.10).</text>
</comment>
<comment type="interaction">
    <interactant intactId="EBI-1806244">
        <id>O64722</id>
    </interactant>
    <interactant intactId="EBI-1798250">
        <id>Q39011</id>
        <label>ASK7</label>
    </interactant>
    <organismsDiffer>false</organismsDiffer>
    <experiments>3</experiments>
</comment>
<comment type="interaction">
    <interactant intactId="EBI-1806244">
        <id>O64722</id>
    </interactant>
    <interactant intactId="EBI-15192249">
        <id>C0SUZ3</id>
        <label>At1g35490</label>
    </interactant>
    <organismsDiffer>false</organismsDiffer>
    <experiments>3</experiments>
</comment>
<comment type="interaction">
    <interactant intactId="EBI-1806244">
        <id>O64722</id>
    </interactant>
    <interactant intactId="EBI-4475455">
        <id>Q9FG01</id>
        <label>ATO</label>
    </interactant>
    <organismsDiffer>false</organismsDiffer>
    <experiments>3</experiments>
</comment>
<comment type="interaction">
    <interactant intactId="EBI-1806244">
        <id>O64722</id>
    </interactant>
    <interactant intactId="EBI-15195499">
        <id>Q9M128</id>
        <label>BHLH57</label>
    </interactant>
    <organismsDiffer>false</organismsDiffer>
    <experiments>3</experiments>
</comment>
<comment type="interaction">
    <interactant intactId="EBI-1806244">
        <id>O64722</id>
    </interactant>
    <interactant intactId="EBI-943044">
        <id>Q8RU59</id>
        <label>BZIP48</label>
    </interactant>
    <organismsDiffer>false</organismsDiffer>
    <experiments>4</experiments>
</comment>
<comment type="interaction">
    <interactant intactId="EBI-1806244">
        <id>O64722</id>
    </interactant>
    <interactant intactId="EBI-4446727">
        <id>Q94ID6</id>
        <label>ERF12</label>
    </interactant>
    <organismsDiffer>false</organismsDiffer>
    <experiments>3</experiments>
</comment>
<comment type="interaction">
    <interactant intactId="EBI-1806244">
        <id>O64722</id>
    </interactant>
    <interactant intactId="EBI-2000137">
        <id>Q9MAI5</id>
        <label>ERF8</label>
    </interactant>
    <organismsDiffer>false</organismsDiffer>
    <experiments>3</experiments>
</comment>
<comment type="interaction">
    <interactant intactId="EBI-1806244">
        <id>O64722</id>
    </interactant>
    <interactant intactId="EBI-4431933">
        <id>Q9FE67</id>
        <label>ERF9</label>
    </interactant>
    <organismsDiffer>false</organismsDiffer>
    <experiments>3</experiments>
</comment>
<comment type="interaction">
    <interactant intactId="EBI-1806244">
        <id>O64722</id>
    </interactant>
    <interactant intactId="EBI-963794">
        <id>Q940G6</id>
        <label>GID1C</label>
    </interactant>
    <organismsDiffer>false</organismsDiffer>
    <experiments>3</experiments>
</comment>
<comment type="interaction">
    <interactant intactId="EBI-1806244">
        <id>O64722</id>
    </interactant>
    <interactant intactId="EBI-632231">
        <id>O24407</id>
        <label>IAA16</label>
    </interactant>
    <organismsDiffer>false</organismsDiffer>
    <experiments>3</experiments>
</comment>
<comment type="interaction">
    <interactant intactId="EBI-1806244">
        <id>O64722</id>
    </interactant>
    <interactant intactId="EBI-632257">
        <id>O24409</id>
        <label>IAA19</label>
    </interactant>
    <organismsDiffer>false</organismsDiffer>
    <experiments>3</experiments>
</comment>
<comment type="interaction">
    <interactant intactId="EBI-1806244">
        <id>O64722</id>
    </interactant>
    <interactant intactId="EBI-632272">
        <id>O24410</id>
        <label>IAA20</label>
    </interactant>
    <organismsDiffer>false</organismsDiffer>
    <experiments>3</experiments>
</comment>
<comment type="interaction">
    <interactant intactId="EBI-1806244">
        <id>O64722</id>
    </interactant>
    <interactant intactId="EBI-3946697">
        <id>Q93WC4</id>
        <label>IAA29</label>
    </interactant>
    <organismsDiffer>false</organismsDiffer>
    <experiments>3</experiments>
</comment>
<comment type="interaction">
    <interactant intactId="EBI-1806244">
        <id>O64722</id>
    </interactant>
    <interactant intactId="EBI-3946459">
        <id>Q9C5X0</id>
        <label>IAA34</label>
    </interactant>
    <organismsDiffer>false</organismsDiffer>
    <experiments>4</experiments>
</comment>
<comment type="interaction">
    <interactant intactId="EBI-1806244">
        <id>O64722</id>
    </interactant>
    <interactant intactId="EBI-15191571">
        <id>Q4PSE2</id>
        <label>NFYC8</label>
    </interactant>
    <organismsDiffer>false</organismsDiffer>
    <experiments>3</experiments>
</comment>
<comment type="interaction">
    <interactant intactId="EBI-1806244">
        <id>O64722</id>
    </interactant>
    <interactant intactId="EBI-25512440">
        <id>Q93WV6</id>
        <label>WRKY68</label>
    </interactant>
    <organismsDiffer>false</organismsDiffer>
    <experiments>3</experiments>
</comment>
<comment type="interaction">
    <interactant intactId="EBI-1806244">
        <id>O64722</id>
    </interactant>
    <interactant intactId="EBI-1806298">
        <id>Q9FIW9</id>
        <label>ZHD10</label>
    </interactant>
    <organismsDiffer>false</organismsDiffer>
    <experiments>4</experiments>
</comment>
<comment type="interaction">
    <interactant intactId="EBI-1806244">
        <id>O64722</id>
    </interactant>
    <interactant intactId="EBI-1806169">
        <id>Q9FRL5</id>
        <label>ZHD5</label>
    </interactant>
    <organismsDiffer>false</organismsDiffer>
    <experiments>4</experiments>
</comment>
<comment type="subcellular location">
    <subcellularLocation>
        <location evidence="2">Nucleus</location>
    </subcellularLocation>
    <text evidence="1">Interactions with MIF proteins prevent nuclear subcellular location and leads to a scattered repartition throughout the cytoplasm.</text>
</comment>
<comment type="tissue specificity">
    <text evidence="5">Mostly expressed in flowers and inflorescence.</text>
</comment>
<comment type="domain">
    <text>The homeodomain differs form the typical one by having namely 4 instead of 3 extra amino acids inserted in the loop between helix 1 and helix 2.</text>
</comment>
<proteinExistence type="evidence at protein level"/>
<accession>O64722</accession>
<accession>Q8RWR4</accession>
<reference key="1">
    <citation type="journal article" date="1999" name="Nature">
        <title>Sequence and analysis of chromosome 2 of the plant Arabidopsis thaliana.</title>
        <authorList>
            <person name="Lin X."/>
            <person name="Kaul S."/>
            <person name="Rounsley S.D."/>
            <person name="Shea T.P."/>
            <person name="Benito M.-I."/>
            <person name="Town C.D."/>
            <person name="Fujii C.Y."/>
            <person name="Mason T.M."/>
            <person name="Bowman C.L."/>
            <person name="Barnstead M.E."/>
            <person name="Feldblyum T.V."/>
            <person name="Buell C.R."/>
            <person name="Ketchum K.A."/>
            <person name="Lee J.J."/>
            <person name="Ronning C.M."/>
            <person name="Koo H.L."/>
            <person name="Moffat K.S."/>
            <person name="Cronin L.A."/>
            <person name="Shen M."/>
            <person name="Pai G."/>
            <person name="Van Aken S."/>
            <person name="Umayam L."/>
            <person name="Tallon L.J."/>
            <person name="Gill J.E."/>
            <person name="Adams M.D."/>
            <person name="Carrera A.J."/>
            <person name="Creasy T.H."/>
            <person name="Goodman H.M."/>
            <person name="Somerville C.R."/>
            <person name="Copenhaver G.P."/>
            <person name="Preuss D."/>
            <person name="Nierman W.C."/>
            <person name="White O."/>
            <person name="Eisen J.A."/>
            <person name="Salzberg S.L."/>
            <person name="Fraser C.M."/>
            <person name="Venter J.C."/>
        </authorList>
    </citation>
    <scope>NUCLEOTIDE SEQUENCE [LARGE SCALE GENOMIC DNA]</scope>
    <source>
        <strain>cv. Columbia</strain>
    </source>
</reference>
<reference key="2">
    <citation type="journal article" date="2017" name="Plant J.">
        <title>Araport11: a complete reannotation of the Arabidopsis thaliana reference genome.</title>
        <authorList>
            <person name="Cheng C.Y."/>
            <person name="Krishnakumar V."/>
            <person name="Chan A.P."/>
            <person name="Thibaud-Nissen F."/>
            <person name="Schobel S."/>
            <person name="Town C.D."/>
        </authorList>
    </citation>
    <scope>GENOME REANNOTATION</scope>
    <source>
        <strain>cv. Columbia</strain>
    </source>
</reference>
<reference key="3">
    <citation type="journal article" date="2005" name="Plant Physiol.">
        <title>Analysis of the cDNAs of hypothetical genes on Arabidopsis chromosome 2 reveals numerous transcript variants.</title>
        <authorList>
            <person name="Xiao Y.-L."/>
            <person name="Smith S.R."/>
            <person name="Ishmael N."/>
            <person name="Redman J.C."/>
            <person name="Kumar N."/>
            <person name="Monaghan E.L."/>
            <person name="Ayele M."/>
            <person name="Haas B.J."/>
            <person name="Wu H.C."/>
            <person name="Town C.D."/>
        </authorList>
    </citation>
    <scope>NUCLEOTIDE SEQUENCE [LARGE SCALE MRNA]</scope>
    <source>
        <strain>cv. Columbia</strain>
    </source>
</reference>
<reference key="4">
    <citation type="submission" date="2004-10" db="EMBL/GenBank/DDBJ databases">
        <authorList>
            <person name="Underwood B.A."/>
            <person name="Xiao Y.-L."/>
            <person name="Moskal W.A. Jr."/>
            <person name="Monaghan E.L."/>
            <person name="Wang W."/>
            <person name="Redman J.C."/>
            <person name="Wu H.C."/>
            <person name="Utterback T."/>
            <person name="Town C.D."/>
        </authorList>
    </citation>
    <scope>NUCLEOTIDE SEQUENCE [LARGE SCALE MRNA]</scope>
    <source>
        <strain>cv. Columbia</strain>
    </source>
</reference>
<reference key="5">
    <citation type="journal article" date="2001" name="Plant Mol. Biol.">
        <title>Characterization of a novel class of plant homeodomain proteins that bind to the C4 phosphoenolpyruvate carboxylase gene of Flaveria trinervia.</title>
        <authorList>
            <person name="Windhoevel A."/>
            <person name="Hein I."/>
            <person name="Dabrowa R."/>
            <person name="Stockhaus J."/>
        </authorList>
    </citation>
    <scope>IDENTIFICATION</scope>
</reference>
<reference key="6">
    <citation type="journal article" date="2006" name="Plant Physiol.">
        <title>The Arabidopsis zinc finger-homeodomain genes encode proteins with unique biochemical properties that are coordinately expressed during floral development.</title>
        <authorList>
            <person name="Tan Q.K."/>
            <person name="Irish V.F."/>
        </authorList>
    </citation>
    <scope>INTERACTION WITH ZHD1; ZHD2 AND ZHD11</scope>
    <scope>TISSUE SPECIFICITY</scope>
    <scope>GENE FAMILY</scope>
</reference>
<reference key="7">
    <citation type="journal article" date="2008" name="J. Integr. Plant Biol.">
        <title>Phylogenetic analysis of the plant-specific zinc finger-homeobox and mini zinc finger gene families.</title>
        <authorList>
            <person name="Hu W."/>
            <person name="dePamphilis C.W."/>
            <person name="Ma H."/>
        </authorList>
    </citation>
    <scope>GENE FAMILY</scope>
    <scope>NOMENCLATURE</scope>
</reference>
<reference key="8">
    <citation type="journal article" date="2009" name="Plant Mol. Biol.">
        <title>Stress induced and nuclear localized HIPP26 from Arabidopsis thaliana interacts via its heavy metal associated domain with the drought stress related zinc finger transcription factor ATHB29.</title>
        <authorList>
            <person name="Barth O."/>
            <person name="Vogt S."/>
            <person name="Uhlemann R."/>
            <person name="Zschiesche W."/>
            <person name="Humbeck K."/>
        </authorList>
    </citation>
    <scope>INTERACTION WITH HIPP30</scope>
</reference>
<reference key="9">
    <citation type="journal article" date="2011" name="J. Biol. Chem.">
        <title>Nuclear import and DNA binding of the ZHD5 transcription factor is modulated by a competitive peptide inhibitor in Arabidopsis.</title>
        <authorList>
            <person name="Hong S.-Y."/>
            <person name="Kim O.-K."/>
            <person name="Kim S.-G."/>
            <person name="Yang M.-S."/>
            <person name="Park C.-M."/>
        </authorList>
    </citation>
    <scope>INTERACTION WITH MIF2 AND MIF3</scope>
    <scope>GENE FAMILY</scope>
    <scope>NOMENCLATURE</scope>
    <source>
        <strain>cv. Columbia</strain>
    </source>
</reference>
<reference key="10">
    <citation type="journal article" date="2016" name="Curr. Plant Biol.">
        <title>A protein-protein interaction network linking the energy-sensor kinase SnRK1 to multiple signaling pathways in Arabidopsis thaliana.</title>
        <authorList>
            <person name="Nietzsche M."/>
            <person name="Landgraf R."/>
            <person name="Tohge T."/>
            <person name="Boernke F."/>
        </authorList>
    </citation>
    <scope>INTERACTION WITH KIN10; KIN11 AND FLZ8</scope>
</reference>
<evidence type="ECO:0000250" key="1"/>
<evidence type="ECO:0000255" key="2">
    <source>
        <dbReference type="PROSITE-ProRule" id="PRU00108"/>
    </source>
</evidence>
<evidence type="ECO:0000255" key="3">
    <source>
        <dbReference type="PROSITE-ProRule" id="PRU00856"/>
    </source>
</evidence>
<evidence type="ECO:0000256" key="4">
    <source>
        <dbReference type="SAM" id="MobiDB-lite"/>
    </source>
</evidence>
<evidence type="ECO:0000269" key="5">
    <source>
    </source>
</evidence>
<evidence type="ECO:0000269" key="6">
    <source>
    </source>
</evidence>
<evidence type="ECO:0000269" key="7">
    <source>
    </source>
</evidence>
<evidence type="ECO:0000269" key="8">
    <source ref="10"/>
</evidence>
<name>ZHD3_ARATH</name>
<keyword id="KW-0238">DNA-binding</keyword>
<keyword id="KW-0371">Homeobox</keyword>
<keyword id="KW-0479">Metal-binding</keyword>
<keyword id="KW-0539">Nucleus</keyword>
<keyword id="KW-1185">Reference proteome</keyword>
<keyword id="KW-0804">Transcription</keyword>
<keyword id="KW-0805">Transcription regulation</keyword>
<keyword id="KW-0862">Zinc</keyword>
<keyword id="KW-0863">Zinc-finger</keyword>
<dbReference type="EMBL" id="AC004136">
    <property type="protein sequence ID" value="AAC18932.1"/>
    <property type="molecule type" value="Genomic_DNA"/>
</dbReference>
<dbReference type="EMBL" id="CP002685">
    <property type="protein sequence ID" value="AEC05592.1"/>
    <property type="molecule type" value="Genomic_DNA"/>
</dbReference>
<dbReference type="EMBL" id="CP002685">
    <property type="protein sequence ID" value="ANM63181.1"/>
    <property type="molecule type" value="Genomic_DNA"/>
</dbReference>
<dbReference type="EMBL" id="AY091515">
    <property type="protein sequence ID" value="AAM10791.1"/>
    <property type="molecule type" value="mRNA"/>
</dbReference>
<dbReference type="EMBL" id="AY773834">
    <property type="protein sequence ID" value="AAV63863.1"/>
    <property type="molecule type" value="mRNA"/>
</dbReference>
<dbReference type="PIR" id="T00609">
    <property type="entry name" value="T00609"/>
</dbReference>
<dbReference type="RefSeq" id="NP_001318182.1">
    <property type="nucleotide sequence ID" value="NM_001335126.1"/>
</dbReference>
<dbReference type="RefSeq" id="NP_178358.1">
    <property type="nucleotide sequence ID" value="NM_126310.3"/>
</dbReference>
<dbReference type="SMR" id="O64722"/>
<dbReference type="BioGRID" id="186">
    <property type="interactions" value="79"/>
</dbReference>
<dbReference type="FunCoup" id="O64722">
    <property type="interactions" value="373"/>
</dbReference>
<dbReference type="IntAct" id="O64722">
    <property type="interactions" value="85"/>
</dbReference>
<dbReference type="STRING" id="3702.O64722"/>
<dbReference type="iPTMnet" id="O64722"/>
<dbReference type="PaxDb" id="3702-AT2G02540.1"/>
<dbReference type="ProteomicsDB" id="232323"/>
<dbReference type="EnsemblPlants" id="AT2G02540.1">
    <property type="protein sequence ID" value="AT2G02540.1"/>
    <property type="gene ID" value="AT2G02540"/>
</dbReference>
<dbReference type="EnsemblPlants" id="AT2G02540.2">
    <property type="protein sequence ID" value="AT2G02540.2"/>
    <property type="gene ID" value="AT2G02540"/>
</dbReference>
<dbReference type="GeneID" id="814784"/>
<dbReference type="Gramene" id="AT2G02540.1">
    <property type="protein sequence ID" value="AT2G02540.1"/>
    <property type="gene ID" value="AT2G02540"/>
</dbReference>
<dbReference type="Gramene" id="AT2G02540.2">
    <property type="protein sequence ID" value="AT2G02540.2"/>
    <property type="gene ID" value="AT2G02540"/>
</dbReference>
<dbReference type="KEGG" id="ath:AT2G02540"/>
<dbReference type="Araport" id="AT2G02540"/>
<dbReference type="TAIR" id="AT2G02540">
    <property type="gene designation" value="HB21"/>
</dbReference>
<dbReference type="eggNOG" id="ENOG502QSB4">
    <property type="taxonomic scope" value="Eukaryota"/>
</dbReference>
<dbReference type="HOGENOM" id="CLU_039237_2_1_1"/>
<dbReference type="InParanoid" id="O64722"/>
<dbReference type="OMA" id="VILGHHK"/>
<dbReference type="OrthoDB" id="694008at2759"/>
<dbReference type="PhylomeDB" id="O64722"/>
<dbReference type="PRO" id="PR:O64722"/>
<dbReference type="Proteomes" id="UP000006548">
    <property type="component" value="Chromosome 2"/>
</dbReference>
<dbReference type="ExpressionAtlas" id="O64722">
    <property type="expression patterns" value="baseline and differential"/>
</dbReference>
<dbReference type="GO" id="GO:0005634">
    <property type="term" value="C:nucleus"/>
    <property type="evidence" value="ECO:0000250"/>
    <property type="project" value="UniProtKB"/>
</dbReference>
<dbReference type="GO" id="GO:0003677">
    <property type="term" value="F:DNA binding"/>
    <property type="evidence" value="ECO:0000250"/>
    <property type="project" value="TAIR"/>
</dbReference>
<dbReference type="GO" id="GO:0042803">
    <property type="term" value="F:protein homodimerization activity"/>
    <property type="evidence" value="ECO:0000250"/>
    <property type="project" value="UniProtKB"/>
</dbReference>
<dbReference type="GO" id="GO:0000976">
    <property type="term" value="F:transcription cis-regulatory region binding"/>
    <property type="evidence" value="ECO:0000353"/>
    <property type="project" value="TAIR"/>
</dbReference>
<dbReference type="GO" id="GO:0008270">
    <property type="term" value="F:zinc ion binding"/>
    <property type="evidence" value="ECO:0007669"/>
    <property type="project" value="UniProtKB-KW"/>
</dbReference>
<dbReference type="GO" id="GO:0019760">
    <property type="term" value="P:glucosinolate metabolic process"/>
    <property type="evidence" value="ECO:0000315"/>
    <property type="project" value="TAIR"/>
</dbReference>
<dbReference type="FunFam" id="1.10.10.60:FF:000257">
    <property type="entry name" value="Zinc-finger homeodomain protein 2"/>
    <property type="match status" value="1"/>
</dbReference>
<dbReference type="Gene3D" id="1.10.10.60">
    <property type="entry name" value="Homeodomain-like"/>
    <property type="match status" value="1"/>
</dbReference>
<dbReference type="InterPro" id="IPR001356">
    <property type="entry name" value="HD"/>
</dbReference>
<dbReference type="InterPro" id="IPR009057">
    <property type="entry name" value="Homeodomain-like_sf"/>
</dbReference>
<dbReference type="InterPro" id="IPR006455">
    <property type="entry name" value="Homeodomain_ZF_HD"/>
</dbReference>
<dbReference type="InterPro" id="IPR006456">
    <property type="entry name" value="ZF_HD_homeobox_Cys/His_dimer"/>
</dbReference>
<dbReference type="NCBIfam" id="TIGR01565">
    <property type="entry name" value="homeo_ZF_HD"/>
    <property type="match status" value="1"/>
</dbReference>
<dbReference type="NCBIfam" id="TIGR01566">
    <property type="entry name" value="ZF_HD_prot_N"/>
    <property type="match status" value="1"/>
</dbReference>
<dbReference type="PANTHER" id="PTHR31948">
    <property type="entry name" value="ZINC-FINGER HOMEODOMAIN PROTEIN 2"/>
    <property type="match status" value="1"/>
</dbReference>
<dbReference type="PANTHER" id="PTHR31948:SF163">
    <property type="entry name" value="ZINC-FINGER HOMEODOMAIN PROTEIN 3"/>
    <property type="match status" value="1"/>
</dbReference>
<dbReference type="Pfam" id="PF04770">
    <property type="entry name" value="ZF-HD_dimer"/>
    <property type="match status" value="1"/>
</dbReference>
<dbReference type="SUPFAM" id="SSF46689">
    <property type="entry name" value="Homeodomain-like"/>
    <property type="match status" value="1"/>
</dbReference>
<dbReference type="PROSITE" id="PS50071">
    <property type="entry name" value="HOMEOBOX_2"/>
    <property type="match status" value="1"/>
</dbReference>
<dbReference type="PROSITE" id="PS51523">
    <property type="entry name" value="ZF_HD_DIMER"/>
    <property type="match status" value="1"/>
</dbReference>
<gene>
    <name type="primary">ZHD3</name>
    <name type="synonym">HB21</name>
    <name type="synonym">ZFHD4</name>
    <name type="ordered locus">At2g02540</name>
    <name type="ORF">T8K22.16</name>
</gene>
<feature type="chain" id="PRO_0000426017" description="Zinc-finger homeodomain protein 3">
    <location>
        <begin position="1"/>
        <end position="310"/>
    </location>
</feature>
<feature type="zinc finger region" description="ZF-HD dimerization-type; degenerate" evidence="3">
    <location>
        <begin position="87"/>
        <end position="136"/>
    </location>
</feature>
<feature type="DNA-binding region" description="Homeobox" evidence="2">
    <location>
        <begin position="222"/>
        <end position="285"/>
    </location>
</feature>
<feature type="region of interest" description="Disordered" evidence="4">
    <location>
        <begin position="1"/>
        <end position="64"/>
    </location>
</feature>
<feature type="region of interest" description="Disordered" evidence="4">
    <location>
        <begin position="184"/>
        <end position="220"/>
    </location>
</feature>
<feature type="region of interest" description="Disordered" evidence="4">
    <location>
        <begin position="281"/>
        <end position="310"/>
    </location>
</feature>
<feature type="compositionally biased region" description="Polar residues" evidence="4">
    <location>
        <begin position="39"/>
        <end position="56"/>
    </location>
</feature>
<feature type="compositionally biased region" description="Acidic residues" evidence="4">
    <location>
        <begin position="190"/>
        <end position="199"/>
    </location>
</feature>
<feature type="compositionally biased region" description="Low complexity" evidence="4">
    <location>
        <begin position="281"/>
        <end position="291"/>
    </location>
</feature>
<feature type="compositionally biased region" description="Polar residues" evidence="4">
    <location>
        <begin position="292"/>
        <end position="310"/>
    </location>
</feature>
<feature type="site" description="Required for DNA-binding" evidence="1">
    <location>
        <position position="274"/>
    </location>
</feature>